<name>SYV_PSEU2</name>
<reference key="1">
    <citation type="journal article" date="2005" name="Proc. Natl. Acad. Sci. U.S.A.">
        <title>Comparison of the complete genome sequences of Pseudomonas syringae pv. syringae B728a and pv. tomato DC3000.</title>
        <authorList>
            <person name="Feil H."/>
            <person name="Feil W.S."/>
            <person name="Chain P."/>
            <person name="Larimer F."/>
            <person name="Dibartolo G."/>
            <person name="Copeland A."/>
            <person name="Lykidis A."/>
            <person name="Trong S."/>
            <person name="Nolan M."/>
            <person name="Goltsman E."/>
            <person name="Thiel J."/>
            <person name="Malfatti S."/>
            <person name="Loper J.E."/>
            <person name="Lapidus A."/>
            <person name="Detter J.C."/>
            <person name="Land M."/>
            <person name="Richardson P.M."/>
            <person name="Kyrpides N.C."/>
            <person name="Ivanova N."/>
            <person name="Lindow S.E."/>
        </authorList>
    </citation>
    <scope>NUCLEOTIDE SEQUENCE [LARGE SCALE GENOMIC DNA]</scope>
    <source>
        <strain>B728a</strain>
    </source>
</reference>
<dbReference type="EC" id="6.1.1.9" evidence="1"/>
<dbReference type="EMBL" id="CP000075">
    <property type="protein sequence ID" value="AAY36142.1"/>
    <property type="molecule type" value="Genomic_DNA"/>
</dbReference>
<dbReference type="RefSeq" id="WP_011266818.1">
    <property type="nucleotide sequence ID" value="NC_007005.1"/>
</dbReference>
<dbReference type="RefSeq" id="YP_234180.1">
    <property type="nucleotide sequence ID" value="NC_007005.1"/>
</dbReference>
<dbReference type="SMR" id="Q4ZXI0"/>
<dbReference type="STRING" id="205918.Psyr_1086"/>
<dbReference type="KEGG" id="psb:Psyr_1086"/>
<dbReference type="PATRIC" id="fig|205918.7.peg.1118"/>
<dbReference type="eggNOG" id="COG0525">
    <property type="taxonomic scope" value="Bacteria"/>
</dbReference>
<dbReference type="HOGENOM" id="CLU_001493_0_2_6"/>
<dbReference type="OrthoDB" id="9810365at2"/>
<dbReference type="Proteomes" id="UP000000426">
    <property type="component" value="Chromosome"/>
</dbReference>
<dbReference type="GO" id="GO:0005829">
    <property type="term" value="C:cytosol"/>
    <property type="evidence" value="ECO:0007669"/>
    <property type="project" value="TreeGrafter"/>
</dbReference>
<dbReference type="GO" id="GO:0002161">
    <property type="term" value="F:aminoacyl-tRNA deacylase activity"/>
    <property type="evidence" value="ECO:0007669"/>
    <property type="project" value="InterPro"/>
</dbReference>
<dbReference type="GO" id="GO:0005524">
    <property type="term" value="F:ATP binding"/>
    <property type="evidence" value="ECO:0007669"/>
    <property type="project" value="UniProtKB-UniRule"/>
</dbReference>
<dbReference type="GO" id="GO:0004832">
    <property type="term" value="F:valine-tRNA ligase activity"/>
    <property type="evidence" value="ECO:0007669"/>
    <property type="project" value="UniProtKB-UniRule"/>
</dbReference>
<dbReference type="GO" id="GO:0006438">
    <property type="term" value="P:valyl-tRNA aminoacylation"/>
    <property type="evidence" value="ECO:0007669"/>
    <property type="project" value="UniProtKB-UniRule"/>
</dbReference>
<dbReference type="CDD" id="cd07962">
    <property type="entry name" value="Anticodon_Ia_Val"/>
    <property type="match status" value="1"/>
</dbReference>
<dbReference type="CDD" id="cd00817">
    <property type="entry name" value="ValRS_core"/>
    <property type="match status" value="1"/>
</dbReference>
<dbReference type="FunFam" id="1.10.287.380:FF:000001">
    <property type="entry name" value="Valine--tRNA ligase"/>
    <property type="match status" value="1"/>
</dbReference>
<dbReference type="FunFam" id="1.10.730.10:FF:000007">
    <property type="entry name" value="Valine--tRNA ligase"/>
    <property type="match status" value="1"/>
</dbReference>
<dbReference type="FunFam" id="3.40.50.620:FF:000146">
    <property type="entry name" value="Valine--tRNA ligase"/>
    <property type="match status" value="1"/>
</dbReference>
<dbReference type="FunFam" id="3.90.740.10:FF:000003">
    <property type="entry name" value="Valine--tRNA ligase"/>
    <property type="match status" value="1"/>
</dbReference>
<dbReference type="FunFam" id="3.40.50.620:FF:000020">
    <property type="entry name" value="Valine--tRNA ligase, mitochondrial"/>
    <property type="match status" value="1"/>
</dbReference>
<dbReference type="Gene3D" id="3.40.50.620">
    <property type="entry name" value="HUPs"/>
    <property type="match status" value="2"/>
</dbReference>
<dbReference type="Gene3D" id="1.10.730.10">
    <property type="entry name" value="Isoleucyl-tRNA Synthetase, Domain 1"/>
    <property type="match status" value="1"/>
</dbReference>
<dbReference type="Gene3D" id="1.10.287.380">
    <property type="entry name" value="Valyl-tRNA synthetase, C-terminal domain"/>
    <property type="match status" value="1"/>
</dbReference>
<dbReference type="Gene3D" id="3.90.740.10">
    <property type="entry name" value="Valyl/Leucyl/Isoleucyl-tRNA synthetase, editing domain"/>
    <property type="match status" value="1"/>
</dbReference>
<dbReference type="HAMAP" id="MF_02004">
    <property type="entry name" value="Val_tRNA_synth_type1"/>
    <property type="match status" value="1"/>
</dbReference>
<dbReference type="InterPro" id="IPR001412">
    <property type="entry name" value="aa-tRNA-synth_I_CS"/>
</dbReference>
<dbReference type="InterPro" id="IPR002300">
    <property type="entry name" value="aa-tRNA-synth_Ia"/>
</dbReference>
<dbReference type="InterPro" id="IPR033705">
    <property type="entry name" value="Anticodon_Ia_Val"/>
</dbReference>
<dbReference type="InterPro" id="IPR013155">
    <property type="entry name" value="M/V/L/I-tRNA-synth_anticd-bd"/>
</dbReference>
<dbReference type="InterPro" id="IPR014729">
    <property type="entry name" value="Rossmann-like_a/b/a_fold"/>
</dbReference>
<dbReference type="InterPro" id="IPR010978">
    <property type="entry name" value="tRNA-bd_arm"/>
</dbReference>
<dbReference type="InterPro" id="IPR009080">
    <property type="entry name" value="tRNAsynth_Ia_anticodon-bd"/>
</dbReference>
<dbReference type="InterPro" id="IPR037118">
    <property type="entry name" value="Val-tRNA_synth_C_sf"/>
</dbReference>
<dbReference type="InterPro" id="IPR019499">
    <property type="entry name" value="Val-tRNA_synth_tRNA-bd"/>
</dbReference>
<dbReference type="InterPro" id="IPR009008">
    <property type="entry name" value="Val/Leu/Ile-tRNA-synth_edit"/>
</dbReference>
<dbReference type="InterPro" id="IPR002303">
    <property type="entry name" value="Valyl-tRNA_ligase"/>
</dbReference>
<dbReference type="NCBIfam" id="NF004349">
    <property type="entry name" value="PRK05729.1"/>
    <property type="match status" value="1"/>
</dbReference>
<dbReference type="NCBIfam" id="TIGR00422">
    <property type="entry name" value="valS"/>
    <property type="match status" value="1"/>
</dbReference>
<dbReference type="PANTHER" id="PTHR11946:SF93">
    <property type="entry name" value="VALINE--TRNA LIGASE, CHLOROPLASTIC_MITOCHONDRIAL 2"/>
    <property type="match status" value="1"/>
</dbReference>
<dbReference type="PANTHER" id="PTHR11946">
    <property type="entry name" value="VALYL-TRNA SYNTHETASES"/>
    <property type="match status" value="1"/>
</dbReference>
<dbReference type="Pfam" id="PF08264">
    <property type="entry name" value="Anticodon_1"/>
    <property type="match status" value="1"/>
</dbReference>
<dbReference type="Pfam" id="PF00133">
    <property type="entry name" value="tRNA-synt_1"/>
    <property type="match status" value="1"/>
</dbReference>
<dbReference type="Pfam" id="PF10458">
    <property type="entry name" value="Val_tRNA-synt_C"/>
    <property type="match status" value="1"/>
</dbReference>
<dbReference type="PRINTS" id="PR00986">
    <property type="entry name" value="TRNASYNTHVAL"/>
</dbReference>
<dbReference type="SUPFAM" id="SSF47323">
    <property type="entry name" value="Anticodon-binding domain of a subclass of class I aminoacyl-tRNA synthetases"/>
    <property type="match status" value="1"/>
</dbReference>
<dbReference type="SUPFAM" id="SSF52374">
    <property type="entry name" value="Nucleotidylyl transferase"/>
    <property type="match status" value="1"/>
</dbReference>
<dbReference type="SUPFAM" id="SSF46589">
    <property type="entry name" value="tRNA-binding arm"/>
    <property type="match status" value="1"/>
</dbReference>
<dbReference type="SUPFAM" id="SSF50677">
    <property type="entry name" value="ValRS/IleRS/LeuRS editing domain"/>
    <property type="match status" value="1"/>
</dbReference>
<dbReference type="PROSITE" id="PS00178">
    <property type="entry name" value="AA_TRNA_LIGASE_I"/>
    <property type="match status" value="1"/>
</dbReference>
<comment type="function">
    <text evidence="1">Catalyzes the attachment of valine to tRNA(Val). As ValRS can inadvertently accommodate and process structurally similar amino acids such as threonine, to avoid such errors, it has a 'posttransfer' editing activity that hydrolyzes mischarged Thr-tRNA(Val) in a tRNA-dependent manner.</text>
</comment>
<comment type="catalytic activity">
    <reaction evidence="1">
        <text>tRNA(Val) + L-valine + ATP = L-valyl-tRNA(Val) + AMP + diphosphate</text>
        <dbReference type="Rhea" id="RHEA:10704"/>
        <dbReference type="Rhea" id="RHEA-COMP:9672"/>
        <dbReference type="Rhea" id="RHEA-COMP:9708"/>
        <dbReference type="ChEBI" id="CHEBI:30616"/>
        <dbReference type="ChEBI" id="CHEBI:33019"/>
        <dbReference type="ChEBI" id="CHEBI:57762"/>
        <dbReference type="ChEBI" id="CHEBI:78442"/>
        <dbReference type="ChEBI" id="CHEBI:78537"/>
        <dbReference type="ChEBI" id="CHEBI:456215"/>
        <dbReference type="EC" id="6.1.1.9"/>
    </reaction>
</comment>
<comment type="subunit">
    <text evidence="1">Monomer.</text>
</comment>
<comment type="subcellular location">
    <subcellularLocation>
        <location evidence="1">Cytoplasm</location>
    </subcellularLocation>
</comment>
<comment type="domain">
    <text evidence="1">ValRS has two distinct active sites: one for aminoacylation and one for editing. The misactivated threonine is translocated from the active site to the editing site.</text>
</comment>
<comment type="domain">
    <text evidence="1">The C-terminal coiled-coil domain is crucial for aminoacylation activity.</text>
</comment>
<comment type="similarity">
    <text evidence="1">Belongs to the class-I aminoacyl-tRNA synthetase family. ValS type 1 subfamily.</text>
</comment>
<feature type="chain" id="PRO_0000224539" description="Valine--tRNA ligase">
    <location>
        <begin position="1"/>
        <end position="948"/>
    </location>
</feature>
<feature type="coiled-coil region" evidence="1">
    <location>
        <begin position="879"/>
        <end position="945"/>
    </location>
</feature>
<feature type="short sequence motif" description="'HIGH' region">
    <location>
        <begin position="40"/>
        <end position="50"/>
    </location>
</feature>
<feature type="short sequence motif" description="'KMSKS' region">
    <location>
        <begin position="551"/>
        <end position="555"/>
    </location>
</feature>
<feature type="binding site" evidence="1">
    <location>
        <position position="554"/>
    </location>
    <ligand>
        <name>ATP</name>
        <dbReference type="ChEBI" id="CHEBI:30616"/>
    </ligand>
</feature>
<organism>
    <name type="scientific">Pseudomonas syringae pv. syringae (strain B728a)</name>
    <dbReference type="NCBI Taxonomy" id="205918"/>
    <lineage>
        <taxon>Bacteria</taxon>
        <taxon>Pseudomonadati</taxon>
        <taxon>Pseudomonadota</taxon>
        <taxon>Gammaproteobacteria</taxon>
        <taxon>Pseudomonadales</taxon>
        <taxon>Pseudomonadaceae</taxon>
        <taxon>Pseudomonas</taxon>
        <taxon>Pseudomonas syringae</taxon>
    </lineage>
</organism>
<gene>
    <name evidence="1" type="primary">valS</name>
    <name type="ordered locus">Psyr_1086</name>
</gene>
<protein>
    <recommendedName>
        <fullName evidence="1">Valine--tRNA ligase</fullName>
        <ecNumber evidence="1">6.1.1.9</ecNumber>
    </recommendedName>
    <alternativeName>
        <fullName evidence="1">Valyl-tRNA synthetase</fullName>
        <shortName evidence="1">ValRS</shortName>
    </alternativeName>
</protein>
<sequence length="948" mass="107039">MDKTYQPHAIETSWYQTWESENYFAPQGVGDSYTIMIPPPNVTGSLHMGHGFNNAIMDALIRFRRMQGRNTLWQPGTDHAGIATQMLVERRLEAQGVSRHELGREKFLDKIWEWKAESGGNISRQIRRLGSSVDWSRERFTMDDGLSEAVKEAFVRLHEDGLIYRGKRLVNWDTKLHTAISDLEVENHDEKGHLWNLRYPLADGAKTAEGLDYLIVATTRPETMLGDAAVAVNPEDERYKALIGKFVELPLVGRRIPIIADDYCDPEFGTGCVKITPAHDFNDYEVGKRHNLPLLNIFDKNANVLPAAQVFNLDGTLNESVDGSLPAAYAGLDRFEARKQIVAAFDAAGLLVSVDDHALKVPKGDRSGTIIEPWLTDQWYVSTKPLAEPAIAAVEDGRIAFVPKQYENMYFSWMRDIQDWCISRQLWWGHRIPAWYDESGKVYVGRDEAEVRAKNNLGPEVALQQDNDVLDTWFSSGLWTFSTLGWPEKTKALKTFHSTDVLVTGFDIIFFWVARMIMLTMHLVKNEDGTPQVPFKTVYVHGLVRDGQGQKMSKSKGNVLDPLDIVDGIDLETLVEKRTSGLMQPQLAKKIEKQTRQEFADGIASYGTDALRFTFCSLASTGRDIKFDMGRVEGYRNFCNKIWNAARYVLDKGEDCGQNGEAVELSLADRWIISQLQRTEAEVTRQLDQFRFDLAAQALYEFIWNQYCDWYLELSKPVLWDETAPVERQRGTRRTLVRVLEVALRLAHPFMPFITEEIWQRLAPLAGAQGKTIMLQPWPVANEARIDQAAEDDIEWLKGLMLAVRNIRGEMNIGPGKPLQLFLKNVSAEDQRRLSENDYLLKKLAKLESMTVLTEGAEAPLSATALVGDMEVLVPMAGLIDKGAELARLDKEIQRLQGEVQRVGGKLSNAAFVDKAPPEVIAKERAKLTEAEQALGKLAEQHARIASL</sequence>
<accession>Q4ZXI0</accession>
<keyword id="KW-0030">Aminoacyl-tRNA synthetase</keyword>
<keyword id="KW-0067">ATP-binding</keyword>
<keyword id="KW-0175">Coiled coil</keyword>
<keyword id="KW-0963">Cytoplasm</keyword>
<keyword id="KW-0436">Ligase</keyword>
<keyword id="KW-0547">Nucleotide-binding</keyword>
<keyword id="KW-0648">Protein biosynthesis</keyword>
<evidence type="ECO:0000255" key="1">
    <source>
        <dbReference type="HAMAP-Rule" id="MF_02004"/>
    </source>
</evidence>
<proteinExistence type="inferred from homology"/>